<keyword id="KW-0067">ATP-binding</keyword>
<keyword id="KW-0460">Magnesium</keyword>
<keyword id="KW-0479">Metal-binding</keyword>
<keyword id="KW-0547">Nucleotide-binding</keyword>
<keyword id="KW-0548">Nucleotidyltransferase</keyword>
<keyword id="KW-1185">Reference proteome</keyword>
<keyword id="KW-1277">Toxin-antitoxin system</keyword>
<keyword id="KW-0808">Transferase</keyword>
<evidence type="ECO:0000250" key="1">
    <source>
        <dbReference type="UniProtKB" id="A0A0B0QJN8"/>
    </source>
</evidence>
<evidence type="ECO:0000250" key="2">
    <source>
        <dbReference type="UniProtKB" id="Q8ECH7"/>
    </source>
</evidence>
<evidence type="ECO:0000305" key="3"/>
<accession>Q57606</accession>
<protein>
    <recommendedName>
        <fullName>Putative protein adenylyltransferase MJ0141</fullName>
        <ecNumber evidence="1">2.7.7.108</ecNumber>
    </recommendedName>
    <alternativeName>
        <fullName>Putative antitoxin MJ0141</fullName>
    </alternativeName>
</protein>
<dbReference type="EC" id="2.7.7.108" evidence="1"/>
<dbReference type="EMBL" id="L77117">
    <property type="protein sequence ID" value="AAB98124.1"/>
    <property type="molecule type" value="Genomic_DNA"/>
</dbReference>
<dbReference type="PIR" id="F64317">
    <property type="entry name" value="F64317"/>
</dbReference>
<dbReference type="RefSeq" id="WP_010869636.1">
    <property type="nucleotide sequence ID" value="NC_000909.1"/>
</dbReference>
<dbReference type="SMR" id="Q57606"/>
<dbReference type="STRING" id="243232.MJ_0141"/>
<dbReference type="PaxDb" id="243232-MJ_0141"/>
<dbReference type="EnsemblBacteria" id="AAB98124">
    <property type="protein sequence ID" value="AAB98124"/>
    <property type="gene ID" value="MJ_0141"/>
</dbReference>
<dbReference type="GeneID" id="1450985"/>
<dbReference type="KEGG" id="mja:MJ_0141"/>
<dbReference type="eggNOG" id="arCOG01201">
    <property type="taxonomic scope" value="Archaea"/>
</dbReference>
<dbReference type="HOGENOM" id="CLU_130257_3_2_2"/>
<dbReference type="InParanoid" id="Q57606"/>
<dbReference type="OrthoDB" id="9287at2157"/>
<dbReference type="PhylomeDB" id="Q57606"/>
<dbReference type="Proteomes" id="UP000000805">
    <property type="component" value="Chromosome"/>
</dbReference>
<dbReference type="GO" id="GO:0005524">
    <property type="term" value="F:ATP binding"/>
    <property type="evidence" value="ECO:0007669"/>
    <property type="project" value="UniProtKB-KW"/>
</dbReference>
<dbReference type="GO" id="GO:0046872">
    <property type="term" value="F:metal ion binding"/>
    <property type="evidence" value="ECO:0007669"/>
    <property type="project" value="UniProtKB-KW"/>
</dbReference>
<dbReference type="GO" id="GO:0016779">
    <property type="term" value="F:nucleotidyltransferase activity"/>
    <property type="evidence" value="ECO:0007669"/>
    <property type="project" value="UniProtKB-KW"/>
</dbReference>
<dbReference type="CDD" id="cd05403">
    <property type="entry name" value="NT_KNTase_like"/>
    <property type="match status" value="1"/>
</dbReference>
<dbReference type="Gene3D" id="3.30.460.10">
    <property type="entry name" value="Beta Polymerase, domain 2"/>
    <property type="match status" value="1"/>
</dbReference>
<dbReference type="InterPro" id="IPR043519">
    <property type="entry name" value="NT_sf"/>
</dbReference>
<dbReference type="InterPro" id="IPR002934">
    <property type="entry name" value="Polymerase_NTP_transf_dom"/>
</dbReference>
<dbReference type="InterPro" id="IPR052548">
    <property type="entry name" value="Type_VII_TA_antitoxin"/>
</dbReference>
<dbReference type="PANTHER" id="PTHR33933">
    <property type="entry name" value="NUCLEOTIDYLTRANSFERASE"/>
    <property type="match status" value="1"/>
</dbReference>
<dbReference type="PANTHER" id="PTHR33933:SF1">
    <property type="entry name" value="PROTEIN ADENYLYLTRANSFERASE MNTA-RELATED"/>
    <property type="match status" value="1"/>
</dbReference>
<dbReference type="Pfam" id="PF01909">
    <property type="entry name" value="NTP_transf_2"/>
    <property type="match status" value="1"/>
</dbReference>
<dbReference type="SUPFAM" id="SSF81301">
    <property type="entry name" value="Nucleotidyltransferase"/>
    <property type="match status" value="1"/>
</dbReference>
<name>Y141_METJA</name>
<organism>
    <name type="scientific">Methanocaldococcus jannaschii (strain ATCC 43067 / DSM 2661 / JAL-1 / JCM 10045 / NBRC 100440)</name>
    <name type="common">Methanococcus jannaschii</name>
    <dbReference type="NCBI Taxonomy" id="243232"/>
    <lineage>
        <taxon>Archaea</taxon>
        <taxon>Methanobacteriati</taxon>
        <taxon>Methanobacteriota</taxon>
        <taxon>Methanomada group</taxon>
        <taxon>Methanococci</taxon>
        <taxon>Methanococcales</taxon>
        <taxon>Methanocaldococcaceae</taxon>
        <taxon>Methanocaldococcus</taxon>
    </lineage>
</organism>
<gene>
    <name type="ordered locus">MJ0141</name>
</gene>
<sequence>MEIIEIIKEFKKDISTILKDKLDRVILFGSYARGDYDEESDVDVLILVKEMPTLKEKQKIIKIASRYSLKYDILISPIIYKKTIKTSFIDEVENYGVEV</sequence>
<reference key="1">
    <citation type="journal article" date="1996" name="Science">
        <title>Complete genome sequence of the methanogenic archaeon, Methanococcus jannaschii.</title>
        <authorList>
            <person name="Bult C.J."/>
            <person name="White O."/>
            <person name="Olsen G.J."/>
            <person name="Zhou L."/>
            <person name="Fleischmann R.D."/>
            <person name="Sutton G.G."/>
            <person name="Blake J.A."/>
            <person name="FitzGerald L.M."/>
            <person name="Clayton R.A."/>
            <person name="Gocayne J.D."/>
            <person name="Kerlavage A.R."/>
            <person name="Dougherty B.A."/>
            <person name="Tomb J.-F."/>
            <person name="Adams M.D."/>
            <person name="Reich C.I."/>
            <person name="Overbeek R."/>
            <person name="Kirkness E.F."/>
            <person name="Weinstock K.G."/>
            <person name="Merrick J.M."/>
            <person name="Glodek A."/>
            <person name="Scott J.L."/>
            <person name="Geoghagen N.S.M."/>
            <person name="Weidman J.F."/>
            <person name="Fuhrmann J.L."/>
            <person name="Nguyen D."/>
            <person name="Utterback T.R."/>
            <person name="Kelley J.M."/>
            <person name="Peterson J.D."/>
            <person name="Sadow P.W."/>
            <person name="Hanna M.C."/>
            <person name="Cotton M.D."/>
            <person name="Roberts K.M."/>
            <person name="Hurst M.A."/>
            <person name="Kaine B.P."/>
            <person name="Borodovsky M."/>
            <person name="Klenk H.-P."/>
            <person name="Fraser C.M."/>
            <person name="Smith H.O."/>
            <person name="Woese C.R."/>
            <person name="Venter J.C."/>
        </authorList>
    </citation>
    <scope>NUCLEOTIDE SEQUENCE [LARGE SCALE GENOMIC DNA]</scope>
    <source>
        <strain>ATCC 43067 / DSM 2661 / JAL-1 / JCM 10045 / NBRC 100440</strain>
    </source>
</reference>
<proteinExistence type="inferred from homology"/>
<feature type="chain" id="PRO_0000106717" description="Putative protein adenylyltransferase MJ0141">
    <location>
        <begin position="1"/>
        <end position="99"/>
    </location>
</feature>
<feature type="short sequence motif" description="GSX(10)DXD motif" evidence="2">
    <location>
        <begin position="29"/>
        <end position="43"/>
    </location>
</feature>
<feature type="binding site" evidence="2">
    <location>
        <position position="41"/>
    </location>
    <ligand>
        <name>Mg(2+)</name>
        <dbReference type="ChEBI" id="CHEBI:18420"/>
        <label>1</label>
    </ligand>
</feature>
<feature type="binding site" evidence="2">
    <location>
        <position position="41"/>
    </location>
    <ligand>
        <name>Mg(2+)</name>
        <dbReference type="ChEBI" id="CHEBI:18420"/>
        <label>2</label>
    </ligand>
</feature>
<feature type="binding site" evidence="2">
    <location>
        <position position="43"/>
    </location>
    <ligand>
        <name>Mg(2+)</name>
        <dbReference type="ChEBI" id="CHEBI:18420"/>
        <label>1</label>
    </ligand>
</feature>
<feature type="binding site" evidence="2">
    <location>
        <position position="43"/>
    </location>
    <ligand>
        <name>Mg(2+)</name>
        <dbReference type="ChEBI" id="CHEBI:18420"/>
        <label>2</label>
    </ligand>
</feature>
<comment type="function">
    <text evidence="2">Putative antitoxin component of a putative type VII toxin-antitoxin (TA) system. Its cognate toxin might be MF0142, which it might AMPylate.</text>
</comment>
<comment type="catalytic activity">
    <reaction evidence="2">
        <text>L-tyrosyl-[protein] + ATP = O-(5'-adenylyl)-L-tyrosyl-[protein] + diphosphate</text>
        <dbReference type="Rhea" id="RHEA:54288"/>
        <dbReference type="Rhea" id="RHEA-COMP:10136"/>
        <dbReference type="Rhea" id="RHEA-COMP:13846"/>
        <dbReference type="ChEBI" id="CHEBI:30616"/>
        <dbReference type="ChEBI" id="CHEBI:33019"/>
        <dbReference type="ChEBI" id="CHEBI:46858"/>
        <dbReference type="ChEBI" id="CHEBI:83624"/>
        <dbReference type="EC" id="2.7.7.108"/>
    </reaction>
</comment>
<comment type="catalytic activity">
    <reaction evidence="2">
        <text>O-(5'-adenylyl)-L-tyrosyl-[protein] + ATP = O-[5'-(adenylyl-(5'-&gt;3')-adenylyl)]-L-tyrosyl-[protein] + diphosphate</text>
        <dbReference type="Rhea" id="RHEA:66528"/>
        <dbReference type="Rhea" id="RHEA-COMP:13846"/>
        <dbReference type="Rhea" id="RHEA-COMP:17046"/>
        <dbReference type="ChEBI" id="CHEBI:30616"/>
        <dbReference type="ChEBI" id="CHEBI:33019"/>
        <dbReference type="ChEBI" id="CHEBI:83624"/>
        <dbReference type="ChEBI" id="CHEBI:167160"/>
    </reaction>
</comment>
<comment type="cofactor">
    <cofactor evidence="2">
        <name>Mg(2+)</name>
        <dbReference type="ChEBI" id="CHEBI:18420"/>
    </cofactor>
    <text evidence="2">Binds 2 Mg(2+) ions.</text>
</comment>
<comment type="similarity">
    <text evidence="3">Belongs to the MntA antitoxin family.</text>
</comment>